<gene>
    <name type="primary">RTNLB23</name>
    <name type="ordered locus">At1g16825</name>
    <name type="ORF">F17F16.24</name>
</gene>
<reference key="1">
    <citation type="journal article" date="2000" name="Nature">
        <title>Sequence and analysis of chromosome 1 of the plant Arabidopsis thaliana.</title>
        <authorList>
            <person name="Theologis A."/>
            <person name="Ecker J.R."/>
            <person name="Palm C.J."/>
            <person name="Federspiel N.A."/>
            <person name="Kaul S."/>
            <person name="White O."/>
            <person name="Alonso J."/>
            <person name="Altafi H."/>
            <person name="Araujo R."/>
            <person name="Bowman C.L."/>
            <person name="Brooks S.Y."/>
            <person name="Buehler E."/>
            <person name="Chan A."/>
            <person name="Chao Q."/>
            <person name="Chen H."/>
            <person name="Cheuk R.F."/>
            <person name="Chin C.W."/>
            <person name="Chung M.K."/>
            <person name="Conn L."/>
            <person name="Conway A.B."/>
            <person name="Conway A.R."/>
            <person name="Creasy T.H."/>
            <person name="Dewar K."/>
            <person name="Dunn P."/>
            <person name="Etgu P."/>
            <person name="Feldblyum T.V."/>
            <person name="Feng J.-D."/>
            <person name="Fong B."/>
            <person name="Fujii C.Y."/>
            <person name="Gill J.E."/>
            <person name="Goldsmith A.D."/>
            <person name="Haas B."/>
            <person name="Hansen N.F."/>
            <person name="Hughes B."/>
            <person name="Huizar L."/>
            <person name="Hunter J.L."/>
            <person name="Jenkins J."/>
            <person name="Johnson-Hopson C."/>
            <person name="Khan S."/>
            <person name="Khaykin E."/>
            <person name="Kim C.J."/>
            <person name="Koo H.L."/>
            <person name="Kremenetskaia I."/>
            <person name="Kurtz D.B."/>
            <person name="Kwan A."/>
            <person name="Lam B."/>
            <person name="Langin-Hooper S."/>
            <person name="Lee A."/>
            <person name="Lee J.M."/>
            <person name="Lenz C.A."/>
            <person name="Li J.H."/>
            <person name="Li Y.-P."/>
            <person name="Lin X."/>
            <person name="Liu S.X."/>
            <person name="Liu Z.A."/>
            <person name="Luros J.S."/>
            <person name="Maiti R."/>
            <person name="Marziali A."/>
            <person name="Militscher J."/>
            <person name="Miranda M."/>
            <person name="Nguyen M."/>
            <person name="Nierman W.C."/>
            <person name="Osborne B.I."/>
            <person name="Pai G."/>
            <person name="Peterson J."/>
            <person name="Pham P.K."/>
            <person name="Rizzo M."/>
            <person name="Rooney T."/>
            <person name="Rowley D."/>
            <person name="Sakano H."/>
            <person name="Salzberg S.L."/>
            <person name="Schwartz J.R."/>
            <person name="Shinn P."/>
            <person name="Southwick A.M."/>
            <person name="Sun H."/>
            <person name="Tallon L.J."/>
            <person name="Tambunga G."/>
            <person name="Toriumi M.J."/>
            <person name="Town C.D."/>
            <person name="Utterback T."/>
            <person name="Van Aken S."/>
            <person name="Vaysberg M."/>
            <person name="Vysotskaia V.S."/>
            <person name="Walker M."/>
            <person name="Wu D."/>
            <person name="Yu G."/>
            <person name="Fraser C.M."/>
            <person name="Venter J.C."/>
            <person name="Davis R.W."/>
        </authorList>
    </citation>
    <scope>NUCLEOTIDE SEQUENCE [LARGE SCALE GENOMIC DNA]</scope>
    <source>
        <strain>cv. Columbia</strain>
    </source>
</reference>
<reference key="2">
    <citation type="journal article" date="2017" name="Plant J.">
        <title>Araport11: a complete reannotation of the Arabidopsis thaliana reference genome.</title>
        <authorList>
            <person name="Cheng C.Y."/>
            <person name="Krishnakumar V."/>
            <person name="Chan A.P."/>
            <person name="Thibaud-Nissen F."/>
            <person name="Schobel S."/>
            <person name="Town C.D."/>
        </authorList>
    </citation>
    <scope>GENOME REANNOTATION</scope>
    <source>
        <strain>cv. Columbia</strain>
    </source>
</reference>
<reference key="3">
    <citation type="journal article" date="2004" name="Genome Res.">
        <title>Whole genome sequence comparisons and 'full-length' cDNA sequences: a combined approach to evaluate and improve Arabidopsis genome annotation.</title>
        <authorList>
            <person name="Castelli V."/>
            <person name="Aury J.-M."/>
            <person name="Jaillon O."/>
            <person name="Wincker P."/>
            <person name="Clepet C."/>
            <person name="Menard M."/>
            <person name="Cruaud C."/>
            <person name="Quetier F."/>
            <person name="Scarpelli C."/>
            <person name="Schaechter V."/>
            <person name="Temple G."/>
            <person name="Caboche M."/>
            <person name="Weissenbach J."/>
            <person name="Salanoubat M."/>
        </authorList>
    </citation>
    <scope>NUCLEOTIDE SEQUENCE [LARGE SCALE MRNA]</scope>
    <source>
        <strain>cv. Columbia</strain>
    </source>
</reference>
<accession>P0C941</accession>
<evidence type="ECO:0000250" key="1"/>
<evidence type="ECO:0000255" key="2"/>
<evidence type="ECO:0000305" key="3"/>
<dbReference type="EMBL" id="AC026237">
    <property type="status" value="NOT_ANNOTATED_CDS"/>
    <property type="molecule type" value="Genomic_DNA"/>
</dbReference>
<dbReference type="EMBL" id="CP002684">
    <property type="protein sequence ID" value="AEE29503.1"/>
    <property type="molecule type" value="Genomic_DNA"/>
</dbReference>
<dbReference type="EMBL" id="BX817960">
    <property type="status" value="NOT_ANNOTATED_CDS"/>
    <property type="molecule type" value="mRNA"/>
</dbReference>
<dbReference type="RefSeq" id="NP_001154345.1">
    <property type="nucleotide sequence ID" value="NM_001160873.2"/>
</dbReference>
<dbReference type="FunCoup" id="P0C941">
    <property type="interactions" value="153"/>
</dbReference>
<dbReference type="STRING" id="3702.P0C941"/>
<dbReference type="PaxDb" id="3702-AT1G16825.1"/>
<dbReference type="EnsemblPlants" id="AT1G16825.1">
    <property type="protein sequence ID" value="AT1G16825.1"/>
    <property type="gene ID" value="AT1G16825"/>
</dbReference>
<dbReference type="GeneID" id="7922362"/>
<dbReference type="Gramene" id="AT1G16825.1">
    <property type="protein sequence ID" value="AT1G16825.1"/>
    <property type="gene ID" value="AT1G16825"/>
</dbReference>
<dbReference type="KEGG" id="ath:AT1G16825"/>
<dbReference type="Araport" id="AT1G16825"/>
<dbReference type="TAIR" id="AT1G16825"/>
<dbReference type="eggNOG" id="KOG4197">
    <property type="taxonomic scope" value="Eukaryota"/>
</dbReference>
<dbReference type="HOGENOM" id="CLU_128436_0_0_1"/>
<dbReference type="InParanoid" id="P0C941"/>
<dbReference type="OMA" id="MACQNSQ"/>
<dbReference type="PhylomeDB" id="P0C941"/>
<dbReference type="PRO" id="PR:P0C941"/>
<dbReference type="Proteomes" id="UP000006548">
    <property type="component" value="Chromosome 1"/>
</dbReference>
<dbReference type="ExpressionAtlas" id="P0C941">
    <property type="expression patterns" value="baseline and differential"/>
</dbReference>
<dbReference type="GO" id="GO:0005789">
    <property type="term" value="C:endoplasmic reticulum membrane"/>
    <property type="evidence" value="ECO:0007669"/>
    <property type="project" value="UniProtKB-SubCell"/>
</dbReference>
<dbReference type="InterPro" id="IPR003388">
    <property type="entry name" value="Reticulon"/>
</dbReference>
<dbReference type="InterPro" id="IPR044177">
    <property type="entry name" value="RTNLB22/23"/>
</dbReference>
<dbReference type="PANTHER" id="PTHR47879">
    <property type="entry name" value="RETICULON-LIKE PROTEIN B22"/>
    <property type="match status" value="1"/>
</dbReference>
<dbReference type="PANTHER" id="PTHR47879:SF3">
    <property type="entry name" value="RETICULON-LIKE PROTEIN B23"/>
    <property type="match status" value="1"/>
</dbReference>
<dbReference type="Pfam" id="PF02453">
    <property type="entry name" value="Reticulon"/>
    <property type="match status" value="1"/>
</dbReference>
<protein>
    <recommendedName>
        <fullName>Reticulon-like protein B23</fullName>
        <shortName>AtRTNLB23</shortName>
    </recommendedName>
</protein>
<proteinExistence type="evidence at transcript level"/>
<organism>
    <name type="scientific">Arabidopsis thaliana</name>
    <name type="common">Mouse-ear cress</name>
    <dbReference type="NCBI Taxonomy" id="3702"/>
    <lineage>
        <taxon>Eukaryota</taxon>
        <taxon>Viridiplantae</taxon>
        <taxon>Streptophyta</taxon>
        <taxon>Embryophyta</taxon>
        <taxon>Tracheophyta</taxon>
        <taxon>Spermatophyta</taxon>
        <taxon>Magnoliopsida</taxon>
        <taxon>eudicotyledons</taxon>
        <taxon>Gunneridae</taxon>
        <taxon>Pentapetalae</taxon>
        <taxon>rosids</taxon>
        <taxon>malvids</taxon>
        <taxon>Brassicales</taxon>
        <taxon>Brassicaceae</taxon>
        <taxon>Camelineae</taxon>
        <taxon>Arabidopsis</taxon>
    </lineage>
</organism>
<sequence>MGEMGKAIGLLISGTLVYHHCANRNATLLSLISDVLIVLLSSLAILGLLFRHLNVSVPVDPLEWQISQDTACNIVARLANTVGAAESVLRVAATGHDKRLFVKVVICLYFLAALGRIISGVTIAYAGLCLFCLSMLFRSSIRNSVLNRRNGEILD</sequence>
<comment type="subcellular location">
    <subcellularLocation>
        <location evidence="1">Endoplasmic reticulum membrane</location>
        <topology evidence="1">Multi-pass membrane protein</topology>
    </subcellularLocation>
</comment>
<feature type="chain" id="PRO_0000371302" description="Reticulon-like protein B23">
    <location>
        <begin position="1"/>
        <end position="155"/>
    </location>
</feature>
<feature type="transmembrane region" description="Helical" evidence="2">
    <location>
        <begin position="30"/>
        <end position="50"/>
    </location>
</feature>
<feature type="transmembrane region" description="Helical" evidence="2">
    <location>
        <begin position="117"/>
        <end position="137"/>
    </location>
</feature>
<feature type="domain" description="Reticulon">
    <location>
        <begin position="1"/>
        <end position="155"/>
    </location>
</feature>
<feature type="sequence conflict" description="In Ref. 3; BX817960." evidence="3" ref="3">
    <original>Y</original>
    <variation>F</variation>
    <location>
        <position position="18"/>
    </location>
</feature>
<feature type="sequence conflict" description="In Ref. 3; BX817960." evidence="3" ref="3">
    <original>L</original>
    <variation>F</variation>
    <location>
        <position position="29"/>
    </location>
</feature>
<feature type="sequence conflict" description="In Ref. 3; BX817960." evidence="3" ref="3">
    <original>I</original>
    <variation>K</variation>
    <location>
        <position position="118"/>
    </location>
</feature>
<name>RTNLU_ARATH</name>
<keyword id="KW-0256">Endoplasmic reticulum</keyword>
<keyword id="KW-0472">Membrane</keyword>
<keyword id="KW-1185">Reference proteome</keyword>
<keyword id="KW-0812">Transmembrane</keyword>
<keyword id="KW-1133">Transmembrane helix</keyword>